<keyword id="KW-0002">3D-structure</keyword>
<keyword id="KW-1003">Cell membrane</keyword>
<keyword id="KW-0449">Lipoprotein</keyword>
<keyword id="KW-0472">Membrane</keyword>
<keyword id="KW-0564">Palmitate</keyword>
<keyword id="KW-1185">Reference proteome</keyword>
<keyword id="KW-0732">Signal</keyword>
<gene>
    <name type="primary">yehR</name>
    <name type="ordered locus">b2123</name>
    <name type="ordered locus">JW5351</name>
</gene>
<feature type="signal peptide" evidence="1">
    <location>
        <begin position="1"/>
        <end position="22"/>
    </location>
</feature>
<feature type="chain" id="PRO_0000018041" description="Uncharacterized lipoprotein YehR">
    <location>
        <begin position="23"/>
        <end position="153"/>
    </location>
</feature>
<feature type="lipid moiety-binding region" description="N-palmitoyl cysteine" evidence="1">
    <location>
        <position position="23"/>
    </location>
</feature>
<feature type="lipid moiety-binding region" description="S-diacylglycerol cysteine" evidence="1">
    <location>
        <position position="23"/>
    </location>
</feature>
<feature type="strand" evidence="3">
    <location>
        <begin position="28"/>
        <end position="36"/>
    </location>
</feature>
<feature type="strand" evidence="3">
    <location>
        <begin position="39"/>
        <end position="48"/>
    </location>
</feature>
<feature type="strand" evidence="3">
    <location>
        <begin position="51"/>
        <end position="62"/>
    </location>
</feature>
<feature type="turn" evidence="3">
    <location>
        <begin position="63"/>
        <end position="65"/>
    </location>
</feature>
<feature type="helix" evidence="3">
    <location>
        <begin position="71"/>
        <end position="82"/>
    </location>
</feature>
<feature type="turn" evidence="3">
    <location>
        <begin position="83"/>
        <end position="87"/>
    </location>
</feature>
<feature type="strand" evidence="3">
    <location>
        <begin position="88"/>
        <end position="90"/>
    </location>
</feature>
<feature type="strand" evidence="3">
    <location>
        <begin position="92"/>
        <end position="97"/>
    </location>
</feature>
<feature type="strand" evidence="3">
    <location>
        <begin position="99"/>
        <end position="109"/>
    </location>
</feature>
<feature type="helix" evidence="3">
    <location>
        <begin position="115"/>
        <end position="118"/>
    </location>
</feature>
<feature type="turn" evidence="3">
    <location>
        <begin position="119"/>
        <end position="122"/>
    </location>
</feature>
<feature type="helix" evidence="3">
    <location>
        <begin position="128"/>
        <end position="133"/>
    </location>
</feature>
<feature type="helix" evidence="3">
    <location>
        <begin position="137"/>
        <end position="146"/>
    </location>
</feature>
<feature type="strand" evidence="3">
    <location>
        <begin position="151"/>
        <end position="153"/>
    </location>
</feature>
<proteinExistence type="evidence at protein level"/>
<sequence>MKAFNKLFSLVVASVLVFSLAGCGDKEESKKFSANLNGTEIAITYVYKGDKVLKQSSETKIQFASIGATTKEDAAKTLEPLSAKYKNIAGVEEKLTYTDTYAQENVTIDMEKVDFKALQGISGINVSAEDAKKGITMAQMELVMKAAGFKEVK</sequence>
<evidence type="ECO:0000255" key="1">
    <source>
        <dbReference type="PROSITE-ProRule" id="PRU00303"/>
    </source>
</evidence>
<evidence type="ECO:0000305" key="2"/>
<evidence type="ECO:0007829" key="3">
    <source>
        <dbReference type="PDB" id="2JOE"/>
    </source>
</evidence>
<dbReference type="EMBL" id="U00007">
    <property type="protein sequence ID" value="AAA60486.1"/>
    <property type="status" value="ALT_INIT"/>
    <property type="molecule type" value="Genomic_DNA"/>
</dbReference>
<dbReference type="EMBL" id="U00096">
    <property type="protein sequence ID" value="AAC75184.2"/>
    <property type="molecule type" value="Genomic_DNA"/>
</dbReference>
<dbReference type="EMBL" id="AP009048">
    <property type="protein sequence ID" value="BAE76599.1"/>
    <property type="molecule type" value="Genomic_DNA"/>
</dbReference>
<dbReference type="RefSeq" id="NP_416627.2">
    <property type="nucleotide sequence ID" value="NC_000913.3"/>
</dbReference>
<dbReference type="RefSeq" id="WP_001295429.1">
    <property type="nucleotide sequence ID" value="NZ_STEB01000002.1"/>
</dbReference>
<dbReference type="PDB" id="2JOE">
    <property type="method" value="NMR"/>
    <property type="chains" value="A=24-153"/>
</dbReference>
<dbReference type="PDBsum" id="2JOE"/>
<dbReference type="BMRB" id="P33354"/>
<dbReference type="SMR" id="P33354"/>
<dbReference type="BioGRID" id="4261867">
    <property type="interactions" value="6"/>
</dbReference>
<dbReference type="BioGRID" id="853267">
    <property type="interactions" value="6"/>
</dbReference>
<dbReference type="FunCoup" id="P33354">
    <property type="interactions" value="17"/>
</dbReference>
<dbReference type="IntAct" id="P33354">
    <property type="interactions" value="6"/>
</dbReference>
<dbReference type="STRING" id="511145.b2123"/>
<dbReference type="PaxDb" id="511145-b2123"/>
<dbReference type="EnsemblBacteria" id="AAC75184">
    <property type="protein sequence ID" value="AAC75184"/>
    <property type="gene ID" value="b2123"/>
</dbReference>
<dbReference type="GeneID" id="949023"/>
<dbReference type="KEGG" id="ecj:JW5351"/>
<dbReference type="KEGG" id="eco:b2123"/>
<dbReference type="KEGG" id="ecoc:C3026_11905"/>
<dbReference type="PATRIC" id="fig|1411691.4.peg.122"/>
<dbReference type="EchoBASE" id="EB1942"/>
<dbReference type="eggNOG" id="COG4808">
    <property type="taxonomic scope" value="Bacteria"/>
</dbReference>
<dbReference type="HOGENOM" id="CLU_126600_1_0_6"/>
<dbReference type="InParanoid" id="P33354"/>
<dbReference type="OMA" id="THEIDYQ"/>
<dbReference type="OrthoDB" id="6586670at2"/>
<dbReference type="PhylomeDB" id="P33354"/>
<dbReference type="BioCyc" id="EcoCyc:EG12004-MONOMER"/>
<dbReference type="EvolutionaryTrace" id="P33354"/>
<dbReference type="PRO" id="PR:P33354"/>
<dbReference type="Proteomes" id="UP000000625">
    <property type="component" value="Chromosome"/>
</dbReference>
<dbReference type="GO" id="GO:0005886">
    <property type="term" value="C:plasma membrane"/>
    <property type="evidence" value="ECO:0007005"/>
    <property type="project" value="EcoCyc"/>
</dbReference>
<dbReference type="Gene3D" id="3.30.1830.10">
    <property type="entry name" value="YehR-like"/>
    <property type="match status" value="1"/>
</dbReference>
<dbReference type="InterPro" id="IPR009736">
    <property type="entry name" value="DUF1307"/>
</dbReference>
<dbReference type="InterPro" id="IPR036699">
    <property type="entry name" value="YehR-like_sf"/>
</dbReference>
<dbReference type="Pfam" id="PF06998">
    <property type="entry name" value="DUF1307"/>
    <property type="match status" value="1"/>
</dbReference>
<dbReference type="PIRSF" id="PIRSF006187">
    <property type="entry name" value="DUF1307"/>
    <property type="match status" value="1"/>
</dbReference>
<dbReference type="SUPFAM" id="SSF160704">
    <property type="entry name" value="YehR-like"/>
    <property type="match status" value="1"/>
</dbReference>
<dbReference type="PROSITE" id="PS51257">
    <property type="entry name" value="PROKAR_LIPOPROTEIN"/>
    <property type="match status" value="1"/>
</dbReference>
<comment type="subcellular location">
    <subcellularLocation>
        <location evidence="1">Cell membrane</location>
        <topology evidence="1">Lipid-anchor</topology>
    </subcellularLocation>
</comment>
<comment type="similarity">
    <text evidence="2">To L.monocytogenes lmo0207.</text>
</comment>
<comment type="sequence caution" evidence="2">
    <conflict type="erroneous initiation">
        <sequence resource="EMBL-CDS" id="AAA60486"/>
    </conflict>
    <text>Extended N-terminus.</text>
</comment>
<protein>
    <recommendedName>
        <fullName>Uncharacterized lipoprotein YehR</fullName>
    </recommendedName>
</protein>
<organism>
    <name type="scientific">Escherichia coli (strain K12)</name>
    <dbReference type="NCBI Taxonomy" id="83333"/>
    <lineage>
        <taxon>Bacteria</taxon>
        <taxon>Pseudomonadati</taxon>
        <taxon>Pseudomonadota</taxon>
        <taxon>Gammaproteobacteria</taxon>
        <taxon>Enterobacterales</taxon>
        <taxon>Enterobacteriaceae</taxon>
        <taxon>Escherichia</taxon>
    </lineage>
</organism>
<name>YEHR_ECOLI</name>
<accession>P33354</accession>
<accession>Q2MAV7</accession>
<reference key="1">
    <citation type="submission" date="1993-10" db="EMBL/GenBank/DDBJ databases">
        <title>Automated multiplex sequencing of the E.coli genome.</title>
        <authorList>
            <person name="Richterich P."/>
            <person name="Lakey N."/>
            <person name="Gryan G."/>
            <person name="Jaehn L."/>
            <person name="Mintz L."/>
            <person name="Robison K."/>
            <person name="Church G.M."/>
        </authorList>
    </citation>
    <scope>NUCLEOTIDE SEQUENCE [LARGE SCALE GENOMIC DNA]</scope>
    <source>
        <strain>K12 / BHB2600</strain>
    </source>
</reference>
<reference key="2">
    <citation type="journal article" date="1997" name="Science">
        <title>The complete genome sequence of Escherichia coli K-12.</title>
        <authorList>
            <person name="Blattner F.R."/>
            <person name="Plunkett G. III"/>
            <person name="Bloch C.A."/>
            <person name="Perna N.T."/>
            <person name="Burland V."/>
            <person name="Riley M."/>
            <person name="Collado-Vides J."/>
            <person name="Glasner J.D."/>
            <person name="Rode C.K."/>
            <person name="Mayhew G.F."/>
            <person name="Gregor J."/>
            <person name="Davis N.W."/>
            <person name="Kirkpatrick H.A."/>
            <person name="Goeden M.A."/>
            <person name="Rose D.J."/>
            <person name="Mau B."/>
            <person name="Shao Y."/>
        </authorList>
    </citation>
    <scope>NUCLEOTIDE SEQUENCE [LARGE SCALE GENOMIC DNA]</scope>
    <source>
        <strain>K12 / MG1655 / ATCC 47076</strain>
    </source>
</reference>
<reference key="3">
    <citation type="journal article" date="2006" name="Mol. Syst. Biol.">
        <title>Highly accurate genome sequences of Escherichia coli K-12 strains MG1655 and W3110.</title>
        <authorList>
            <person name="Hayashi K."/>
            <person name="Morooka N."/>
            <person name="Yamamoto Y."/>
            <person name="Fujita K."/>
            <person name="Isono K."/>
            <person name="Choi S."/>
            <person name="Ohtsubo E."/>
            <person name="Baba T."/>
            <person name="Wanner B.L."/>
            <person name="Mori H."/>
            <person name="Horiuchi T."/>
        </authorList>
    </citation>
    <scope>NUCLEOTIDE SEQUENCE [LARGE SCALE GENOMIC DNA]</scope>
    <source>
        <strain>K12 / W3110 / ATCC 27325 / DSM 5911</strain>
    </source>
</reference>
<reference key="4">
    <citation type="submission" date="2007-03" db="PDB data bank">
        <title>NMR structure of E.coli yehR protein.</title>
        <authorList>
            <consortium name="Northeast structural genomics consortium (NESG)"/>
        </authorList>
    </citation>
    <scope>STRUCTURE BY NMR OF 24-153</scope>
</reference>